<sequence>MKFKQDFFTQLPEFYSQVYPQGITKPEWLAWSDDAAQLIGLSQPTDELLLGLSGNAAVDGATYYAQVYSGHQFGGYTPRLGDGRSIILGEAIGPNGAWDVALKGGGPTPYSRRGDGRAVMRSAVREFLVSEALHHLHVPTTRALAVIGSDLPVWRESQETAAITVRLARSHIRFGHFEFFCHSERGRADKLIQLLNFTITQHYPHLSCDAAGYKAWFLQVVQDTAKMIAHWQAVGFAHGVMNTDNMSILGDSFDFGPFAFLDTFQEDFICNHSDPEGRYAFGQQPGVGLWNLQRLAQALTPVIPSDDLIAILNQYQEALVQTYLRLMRAKLGLSAVDVPSVEQDKQDLDLIGRFTVLMEKNQLDYTQTWRQLGKLDPTSKHSALRDDFIDVSQFDAWYQSYQQRLGAVADIPTWQTERNSVNPKYILRNYLAQEAIIAVEEGNLAPLHLLQKILTQPFAEHAEHEDLAKRPPDWGQGLIMSCSS</sequence>
<accession>A6WTL7</accession>
<comment type="function">
    <text evidence="1">Nucleotidyltransferase involved in the post-translational modification of proteins. It can catalyze the addition of adenosine monophosphate (AMP) or uridine monophosphate (UMP) to a protein, resulting in modifications known as AMPylation and UMPylation.</text>
</comment>
<comment type="catalytic activity">
    <reaction evidence="1">
        <text>L-seryl-[protein] + ATP = 3-O-(5'-adenylyl)-L-seryl-[protein] + diphosphate</text>
        <dbReference type="Rhea" id="RHEA:58120"/>
        <dbReference type="Rhea" id="RHEA-COMP:9863"/>
        <dbReference type="Rhea" id="RHEA-COMP:15073"/>
        <dbReference type="ChEBI" id="CHEBI:29999"/>
        <dbReference type="ChEBI" id="CHEBI:30616"/>
        <dbReference type="ChEBI" id="CHEBI:33019"/>
        <dbReference type="ChEBI" id="CHEBI:142516"/>
        <dbReference type="EC" id="2.7.7.108"/>
    </reaction>
</comment>
<comment type="catalytic activity">
    <reaction evidence="1">
        <text>L-threonyl-[protein] + ATP = 3-O-(5'-adenylyl)-L-threonyl-[protein] + diphosphate</text>
        <dbReference type="Rhea" id="RHEA:54292"/>
        <dbReference type="Rhea" id="RHEA-COMP:11060"/>
        <dbReference type="Rhea" id="RHEA-COMP:13847"/>
        <dbReference type="ChEBI" id="CHEBI:30013"/>
        <dbReference type="ChEBI" id="CHEBI:30616"/>
        <dbReference type="ChEBI" id="CHEBI:33019"/>
        <dbReference type="ChEBI" id="CHEBI:138113"/>
        <dbReference type="EC" id="2.7.7.108"/>
    </reaction>
</comment>
<comment type="catalytic activity">
    <reaction evidence="1">
        <text>L-tyrosyl-[protein] + ATP = O-(5'-adenylyl)-L-tyrosyl-[protein] + diphosphate</text>
        <dbReference type="Rhea" id="RHEA:54288"/>
        <dbReference type="Rhea" id="RHEA-COMP:10136"/>
        <dbReference type="Rhea" id="RHEA-COMP:13846"/>
        <dbReference type="ChEBI" id="CHEBI:30616"/>
        <dbReference type="ChEBI" id="CHEBI:33019"/>
        <dbReference type="ChEBI" id="CHEBI:46858"/>
        <dbReference type="ChEBI" id="CHEBI:83624"/>
        <dbReference type="EC" id="2.7.7.108"/>
    </reaction>
</comment>
<comment type="catalytic activity">
    <reaction evidence="1">
        <text>L-histidyl-[protein] + UTP = N(tele)-(5'-uridylyl)-L-histidyl-[protein] + diphosphate</text>
        <dbReference type="Rhea" id="RHEA:83891"/>
        <dbReference type="Rhea" id="RHEA-COMP:9745"/>
        <dbReference type="Rhea" id="RHEA-COMP:20239"/>
        <dbReference type="ChEBI" id="CHEBI:29979"/>
        <dbReference type="ChEBI" id="CHEBI:33019"/>
        <dbReference type="ChEBI" id="CHEBI:46398"/>
        <dbReference type="ChEBI" id="CHEBI:233474"/>
    </reaction>
</comment>
<comment type="catalytic activity">
    <reaction evidence="1">
        <text>L-seryl-[protein] + UTP = O-(5'-uridylyl)-L-seryl-[protein] + diphosphate</text>
        <dbReference type="Rhea" id="RHEA:64604"/>
        <dbReference type="Rhea" id="RHEA-COMP:9863"/>
        <dbReference type="Rhea" id="RHEA-COMP:16635"/>
        <dbReference type="ChEBI" id="CHEBI:29999"/>
        <dbReference type="ChEBI" id="CHEBI:33019"/>
        <dbReference type="ChEBI" id="CHEBI:46398"/>
        <dbReference type="ChEBI" id="CHEBI:156051"/>
    </reaction>
</comment>
<comment type="catalytic activity">
    <reaction evidence="1">
        <text>L-tyrosyl-[protein] + UTP = O-(5'-uridylyl)-L-tyrosyl-[protein] + diphosphate</text>
        <dbReference type="Rhea" id="RHEA:83887"/>
        <dbReference type="Rhea" id="RHEA-COMP:10136"/>
        <dbReference type="Rhea" id="RHEA-COMP:20238"/>
        <dbReference type="ChEBI" id="CHEBI:33019"/>
        <dbReference type="ChEBI" id="CHEBI:46398"/>
        <dbReference type="ChEBI" id="CHEBI:46858"/>
        <dbReference type="ChEBI" id="CHEBI:90602"/>
    </reaction>
</comment>
<comment type="cofactor">
    <cofactor evidence="1">
        <name>Mg(2+)</name>
        <dbReference type="ChEBI" id="CHEBI:18420"/>
    </cofactor>
    <cofactor evidence="1">
        <name>Mn(2+)</name>
        <dbReference type="ChEBI" id="CHEBI:29035"/>
    </cofactor>
</comment>
<comment type="similarity">
    <text evidence="1">Belongs to the SELO family.</text>
</comment>
<reference key="1">
    <citation type="submission" date="2007-07" db="EMBL/GenBank/DDBJ databases">
        <title>Complete sequence of chromosome of Shewanella baltica OS185.</title>
        <authorList>
            <consortium name="US DOE Joint Genome Institute"/>
            <person name="Copeland A."/>
            <person name="Lucas S."/>
            <person name="Lapidus A."/>
            <person name="Barry K."/>
            <person name="Glavina del Rio T."/>
            <person name="Dalin E."/>
            <person name="Tice H."/>
            <person name="Pitluck S."/>
            <person name="Sims D."/>
            <person name="Brettin T."/>
            <person name="Bruce D."/>
            <person name="Detter J.C."/>
            <person name="Han C."/>
            <person name="Schmutz J."/>
            <person name="Larimer F."/>
            <person name="Land M."/>
            <person name="Hauser L."/>
            <person name="Kyrpides N."/>
            <person name="Mikhailova N."/>
            <person name="Brettar I."/>
            <person name="Rodrigues J."/>
            <person name="Konstantinidis K."/>
            <person name="Tiedje J."/>
            <person name="Richardson P."/>
        </authorList>
    </citation>
    <scope>NUCLEOTIDE SEQUENCE [LARGE SCALE GENOMIC DNA]</scope>
    <source>
        <strain>OS185</strain>
    </source>
</reference>
<protein>
    <recommendedName>
        <fullName evidence="1">Protein nucleotidyltransferase YdiU</fullName>
        <ecNumber evidence="1">2.7.7.-</ecNumber>
    </recommendedName>
    <alternativeName>
        <fullName evidence="1">Protein adenylyltransferase YdiU</fullName>
        <ecNumber evidence="1">2.7.7.108</ecNumber>
    </alternativeName>
    <alternativeName>
        <fullName evidence="1">Protein uridylyltransferase YdiU</fullName>
        <ecNumber evidence="1">2.7.7.-</ecNumber>
    </alternativeName>
</protein>
<gene>
    <name evidence="1" type="primary">ydiU</name>
    <name evidence="1" type="synonym">selO</name>
    <name type="ordered locus">Shew185_4038</name>
</gene>
<proteinExistence type="inferred from homology"/>
<feature type="chain" id="PRO_1000045257" description="Protein nucleotidyltransferase YdiU">
    <location>
        <begin position="1"/>
        <end position="484"/>
    </location>
</feature>
<feature type="active site" description="Proton acceptor" evidence="1">
    <location>
        <position position="244"/>
    </location>
</feature>
<feature type="binding site" evidence="1">
    <location>
        <position position="81"/>
    </location>
    <ligand>
        <name>ATP</name>
        <dbReference type="ChEBI" id="CHEBI:30616"/>
    </ligand>
</feature>
<feature type="binding site" evidence="1">
    <location>
        <position position="83"/>
    </location>
    <ligand>
        <name>ATP</name>
        <dbReference type="ChEBI" id="CHEBI:30616"/>
    </ligand>
</feature>
<feature type="binding site" evidence="1">
    <location>
        <position position="84"/>
    </location>
    <ligand>
        <name>ATP</name>
        <dbReference type="ChEBI" id="CHEBI:30616"/>
    </ligand>
</feature>
<feature type="binding site" evidence="1">
    <location>
        <position position="103"/>
    </location>
    <ligand>
        <name>ATP</name>
        <dbReference type="ChEBI" id="CHEBI:30616"/>
    </ligand>
</feature>
<feature type="binding site" evidence="1">
    <location>
        <position position="115"/>
    </location>
    <ligand>
        <name>ATP</name>
        <dbReference type="ChEBI" id="CHEBI:30616"/>
    </ligand>
</feature>
<feature type="binding site" evidence="1">
    <location>
        <position position="116"/>
    </location>
    <ligand>
        <name>ATP</name>
        <dbReference type="ChEBI" id="CHEBI:30616"/>
    </ligand>
</feature>
<feature type="binding site" evidence="1">
    <location>
        <position position="166"/>
    </location>
    <ligand>
        <name>ATP</name>
        <dbReference type="ChEBI" id="CHEBI:30616"/>
    </ligand>
</feature>
<feature type="binding site" evidence="1">
    <location>
        <position position="173"/>
    </location>
    <ligand>
        <name>ATP</name>
        <dbReference type="ChEBI" id="CHEBI:30616"/>
    </ligand>
</feature>
<feature type="binding site" evidence="1">
    <location>
        <position position="245"/>
    </location>
    <ligand>
        <name>Mg(2+)</name>
        <dbReference type="ChEBI" id="CHEBI:18420"/>
    </ligand>
</feature>
<feature type="binding site" evidence="1">
    <location>
        <position position="254"/>
    </location>
    <ligand>
        <name>ATP</name>
        <dbReference type="ChEBI" id="CHEBI:30616"/>
    </ligand>
</feature>
<feature type="binding site" evidence="1">
    <location>
        <position position="254"/>
    </location>
    <ligand>
        <name>Mg(2+)</name>
        <dbReference type="ChEBI" id="CHEBI:18420"/>
    </ligand>
</feature>
<name>SELO_SHEB8</name>
<dbReference type="EC" id="2.7.7.-" evidence="1"/>
<dbReference type="EC" id="2.7.7.108" evidence="1"/>
<dbReference type="EMBL" id="CP000753">
    <property type="protein sequence ID" value="ABS10156.1"/>
    <property type="molecule type" value="Genomic_DNA"/>
</dbReference>
<dbReference type="RefSeq" id="WP_012090450.1">
    <property type="nucleotide sequence ID" value="NC_009665.1"/>
</dbReference>
<dbReference type="SMR" id="A6WTL7"/>
<dbReference type="KEGG" id="sbm:Shew185_4038"/>
<dbReference type="HOGENOM" id="CLU_010245_4_1_6"/>
<dbReference type="GO" id="GO:0070733">
    <property type="term" value="F:AMPylase activity"/>
    <property type="evidence" value="ECO:0007669"/>
    <property type="project" value="RHEA"/>
</dbReference>
<dbReference type="GO" id="GO:0005524">
    <property type="term" value="F:ATP binding"/>
    <property type="evidence" value="ECO:0007669"/>
    <property type="project" value="UniProtKB-UniRule"/>
</dbReference>
<dbReference type="GO" id="GO:0000287">
    <property type="term" value="F:magnesium ion binding"/>
    <property type="evidence" value="ECO:0007669"/>
    <property type="project" value="UniProtKB-UniRule"/>
</dbReference>
<dbReference type="HAMAP" id="MF_00692">
    <property type="entry name" value="YdiU_SelO"/>
    <property type="match status" value="1"/>
</dbReference>
<dbReference type="InterPro" id="IPR003846">
    <property type="entry name" value="SelO"/>
</dbReference>
<dbReference type="NCBIfam" id="NF000658">
    <property type="entry name" value="PRK00029.1"/>
    <property type="match status" value="1"/>
</dbReference>
<dbReference type="PANTHER" id="PTHR32057">
    <property type="entry name" value="PROTEIN ADENYLYLTRANSFERASE SELO, MITOCHONDRIAL"/>
    <property type="match status" value="1"/>
</dbReference>
<dbReference type="PANTHER" id="PTHR32057:SF14">
    <property type="entry name" value="PROTEIN ADENYLYLTRANSFERASE SELO, MITOCHONDRIAL"/>
    <property type="match status" value="1"/>
</dbReference>
<dbReference type="Pfam" id="PF02696">
    <property type="entry name" value="SelO"/>
    <property type="match status" value="1"/>
</dbReference>
<organism>
    <name type="scientific">Shewanella baltica (strain OS185)</name>
    <dbReference type="NCBI Taxonomy" id="402882"/>
    <lineage>
        <taxon>Bacteria</taxon>
        <taxon>Pseudomonadati</taxon>
        <taxon>Pseudomonadota</taxon>
        <taxon>Gammaproteobacteria</taxon>
        <taxon>Alteromonadales</taxon>
        <taxon>Shewanellaceae</taxon>
        <taxon>Shewanella</taxon>
    </lineage>
</organism>
<evidence type="ECO:0000255" key="1">
    <source>
        <dbReference type="HAMAP-Rule" id="MF_00692"/>
    </source>
</evidence>
<keyword id="KW-0067">ATP-binding</keyword>
<keyword id="KW-0460">Magnesium</keyword>
<keyword id="KW-0464">Manganese</keyword>
<keyword id="KW-0479">Metal-binding</keyword>
<keyword id="KW-0547">Nucleotide-binding</keyword>
<keyword id="KW-0548">Nucleotidyltransferase</keyword>
<keyword id="KW-0808">Transferase</keyword>